<dbReference type="EC" id="2.7.7.18" evidence="1"/>
<dbReference type="EMBL" id="AE008917">
    <property type="protein sequence ID" value="AAL51391.1"/>
    <property type="status" value="ALT_INIT"/>
    <property type="molecule type" value="Genomic_DNA"/>
</dbReference>
<dbReference type="PIR" id="AD3278">
    <property type="entry name" value="AD3278"/>
</dbReference>
<dbReference type="SMR" id="Q8YJ77"/>
<dbReference type="KEGG" id="bme:BMEI0209"/>
<dbReference type="KEGG" id="bmel:DK63_1221"/>
<dbReference type="PATRIC" id="fig|224914.52.peg.1293"/>
<dbReference type="eggNOG" id="COG1057">
    <property type="taxonomic scope" value="Bacteria"/>
</dbReference>
<dbReference type="UniPathway" id="UPA00253">
    <property type="reaction ID" value="UER00332"/>
</dbReference>
<dbReference type="Proteomes" id="UP000000419">
    <property type="component" value="Chromosome I"/>
</dbReference>
<dbReference type="GO" id="GO:0005524">
    <property type="term" value="F:ATP binding"/>
    <property type="evidence" value="ECO:0007669"/>
    <property type="project" value="UniProtKB-KW"/>
</dbReference>
<dbReference type="GO" id="GO:0004515">
    <property type="term" value="F:nicotinate-nucleotide adenylyltransferase activity"/>
    <property type="evidence" value="ECO:0007669"/>
    <property type="project" value="UniProtKB-UniRule"/>
</dbReference>
<dbReference type="GO" id="GO:0009435">
    <property type="term" value="P:NAD biosynthetic process"/>
    <property type="evidence" value="ECO:0007669"/>
    <property type="project" value="UniProtKB-UniRule"/>
</dbReference>
<dbReference type="CDD" id="cd02165">
    <property type="entry name" value="NMNAT"/>
    <property type="match status" value="1"/>
</dbReference>
<dbReference type="Gene3D" id="3.40.50.620">
    <property type="entry name" value="HUPs"/>
    <property type="match status" value="1"/>
</dbReference>
<dbReference type="HAMAP" id="MF_00244">
    <property type="entry name" value="NaMN_adenylyltr"/>
    <property type="match status" value="1"/>
</dbReference>
<dbReference type="InterPro" id="IPR004821">
    <property type="entry name" value="Cyt_trans-like"/>
</dbReference>
<dbReference type="InterPro" id="IPR005248">
    <property type="entry name" value="NadD/NMNAT"/>
</dbReference>
<dbReference type="InterPro" id="IPR014729">
    <property type="entry name" value="Rossmann-like_a/b/a_fold"/>
</dbReference>
<dbReference type="NCBIfam" id="TIGR00482">
    <property type="entry name" value="nicotinate (nicotinamide) nucleotide adenylyltransferase"/>
    <property type="match status" value="1"/>
</dbReference>
<dbReference type="NCBIfam" id="NF000843">
    <property type="entry name" value="PRK00071.2-2"/>
    <property type="match status" value="1"/>
</dbReference>
<dbReference type="NCBIfam" id="NF000845">
    <property type="entry name" value="PRK00071.2-4"/>
    <property type="match status" value="1"/>
</dbReference>
<dbReference type="PANTHER" id="PTHR39321">
    <property type="entry name" value="NICOTINATE-NUCLEOTIDE ADENYLYLTRANSFERASE-RELATED"/>
    <property type="match status" value="1"/>
</dbReference>
<dbReference type="PANTHER" id="PTHR39321:SF3">
    <property type="entry name" value="PHOSPHOPANTETHEINE ADENYLYLTRANSFERASE"/>
    <property type="match status" value="1"/>
</dbReference>
<dbReference type="Pfam" id="PF01467">
    <property type="entry name" value="CTP_transf_like"/>
    <property type="match status" value="1"/>
</dbReference>
<dbReference type="SUPFAM" id="SSF52374">
    <property type="entry name" value="Nucleotidylyl transferase"/>
    <property type="match status" value="1"/>
</dbReference>
<name>NADD_BRUME</name>
<feature type="chain" id="PRO_0000181395" description="Probable nicotinate-nucleotide adenylyltransferase">
    <location>
        <begin position="1"/>
        <end position="194"/>
    </location>
</feature>
<sequence length="194" mass="21977">MTVGLFGGSFNPPHGGHALVAEIAIRRLKLDQLWWMVTPGNPLKDSRELAPLSERLRLSEEVAEDPRIKVTALEAAFHVRYTADTLALIRNANPDVYFVWVMGADNLASFHRWQRWREIAQNFPIAIIDRPGSTLSYLSSRMAQTFSDSRLDERYAPVLARRMPPAWTFIHGPRSSLSSTALRKVQLKKAPSKK</sequence>
<reference key="1">
    <citation type="journal article" date="2002" name="Proc. Natl. Acad. Sci. U.S.A.">
        <title>The genome sequence of the facultative intracellular pathogen Brucella melitensis.</title>
        <authorList>
            <person name="DelVecchio V.G."/>
            <person name="Kapatral V."/>
            <person name="Redkar R.J."/>
            <person name="Patra G."/>
            <person name="Mujer C."/>
            <person name="Los T."/>
            <person name="Ivanova N."/>
            <person name="Anderson I."/>
            <person name="Bhattacharyya A."/>
            <person name="Lykidis A."/>
            <person name="Reznik G."/>
            <person name="Jablonski L."/>
            <person name="Larsen N."/>
            <person name="D'Souza M."/>
            <person name="Bernal A."/>
            <person name="Mazur M."/>
            <person name="Goltsman E."/>
            <person name="Selkov E."/>
            <person name="Elzer P.H."/>
            <person name="Hagius S."/>
            <person name="O'Callaghan D."/>
            <person name="Letesson J.-J."/>
            <person name="Haselkorn R."/>
            <person name="Kyrpides N.C."/>
            <person name="Overbeek R."/>
        </authorList>
    </citation>
    <scope>NUCLEOTIDE SEQUENCE [LARGE SCALE GENOMIC DNA]</scope>
    <source>
        <strain>ATCC 23456 / CCUG 17765 / NCTC 10094 / 16M</strain>
    </source>
</reference>
<proteinExistence type="inferred from homology"/>
<evidence type="ECO:0000255" key="1">
    <source>
        <dbReference type="HAMAP-Rule" id="MF_00244"/>
    </source>
</evidence>
<evidence type="ECO:0000305" key="2"/>
<comment type="function">
    <text evidence="1">Catalyzes the reversible adenylation of nicotinate mononucleotide (NaMN) to nicotinic acid adenine dinucleotide (NaAD).</text>
</comment>
<comment type="catalytic activity">
    <reaction evidence="1">
        <text>nicotinate beta-D-ribonucleotide + ATP + H(+) = deamido-NAD(+) + diphosphate</text>
        <dbReference type="Rhea" id="RHEA:22860"/>
        <dbReference type="ChEBI" id="CHEBI:15378"/>
        <dbReference type="ChEBI" id="CHEBI:30616"/>
        <dbReference type="ChEBI" id="CHEBI:33019"/>
        <dbReference type="ChEBI" id="CHEBI:57502"/>
        <dbReference type="ChEBI" id="CHEBI:58437"/>
        <dbReference type="EC" id="2.7.7.18"/>
    </reaction>
</comment>
<comment type="pathway">
    <text evidence="1">Cofactor biosynthesis; NAD(+) biosynthesis; deamido-NAD(+) from nicotinate D-ribonucleotide: step 1/1.</text>
</comment>
<comment type="similarity">
    <text evidence="1">Belongs to the NadD family.</text>
</comment>
<comment type="sequence caution" evidence="2">
    <conflict type="erroneous initiation">
        <sequence resource="EMBL-CDS" id="AAL51391"/>
    </conflict>
</comment>
<accession>Q8YJ77</accession>
<organism>
    <name type="scientific">Brucella melitensis biotype 1 (strain ATCC 23456 / CCUG 17765 / NCTC 10094 / 16M)</name>
    <dbReference type="NCBI Taxonomy" id="224914"/>
    <lineage>
        <taxon>Bacteria</taxon>
        <taxon>Pseudomonadati</taxon>
        <taxon>Pseudomonadota</taxon>
        <taxon>Alphaproteobacteria</taxon>
        <taxon>Hyphomicrobiales</taxon>
        <taxon>Brucellaceae</taxon>
        <taxon>Brucella/Ochrobactrum group</taxon>
        <taxon>Brucella</taxon>
    </lineage>
</organism>
<keyword id="KW-0067">ATP-binding</keyword>
<keyword id="KW-0520">NAD</keyword>
<keyword id="KW-0547">Nucleotide-binding</keyword>
<keyword id="KW-0548">Nucleotidyltransferase</keyword>
<keyword id="KW-0662">Pyridine nucleotide biosynthesis</keyword>
<keyword id="KW-0808">Transferase</keyword>
<protein>
    <recommendedName>
        <fullName evidence="1">Probable nicotinate-nucleotide adenylyltransferase</fullName>
        <ecNumber evidence="1">2.7.7.18</ecNumber>
    </recommendedName>
    <alternativeName>
        <fullName evidence="1">Deamido-NAD(+) diphosphorylase</fullName>
    </alternativeName>
    <alternativeName>
        <fullName evidence="1">Deamido-NAD(+) pyrophosphorylase</fullName>
    </alternativeName>
    <alternativeName>
        <fullName evidence="1">Nicotinate mononucleotide adenylyltransferase</fullName>
        <shortName evidence="1">NaMN adenylyltransferase</shortName>
    </alternativeName>
</protein>
<gene>
    <name evidence="1" type="primary">nadD</name>
    <name type="ordered locus">BMEI0209</name>
</gene>